<organism>
    <name type="scientific">Rhizobium johnstonii (strain DSM 114642 / LMG 32736 / 3841)</name>
    <name type="common">Rhizobium leguminosarum bv. viciae</name>
    <dbReference type="NCBI Taxonomy" id="216596"/>
    <lineage>
        <taxon>Bacteria</taxon>
        <taxon>Pseudomonadati</taxon>
        <taxon>Pseudomonadota</taxon>
        <taxon>Alphaproteobacteria</taxon>
        <taxon>Hyphomicrobiales</taxon>
        <taxon>Rhizobiaceae</taxon>
        <taxon>Rhizobium/Agrobacterium group</taxon>
        <taxon>Rhizobium</taxon>
        <taxon>Rhizobium johnstonii</taxon>
    </lineage>
</organism>
<protein>
    <recommendedName>
        <fullName evidence="1">Small ribosomal subunit protein uS7</fullName>
    </recommendedName>
    <alternativeName>
        <fullName evidence="2">30S ribosomal protein S7</fullName>
    </alternativeName>
</protein>
<reference key="1">
    <citation type="journal article" date="2006" name="Genome Biol.">
        <title>The genome of Rhizobium leguminosarum has recognizable core and accessory components.</title>
        <authorList>
            <person name="Young J.P.W."/>
            <person name="Crossman L.C."/>
            <person name="Johnston A.W.B."/>
            <person name="Thomson N.R."/>
            <person name="Ghazoui Z.F."/>
            <person name="Hull K.H."/>
            <person name="Wexler M."/>
            <person name="Curson A.R.J."/>
            <person name="Todd J.D."/>
            <person name="Poole P.S."/>
            <person name="Mauchline T.H."/>
            <person name="East A.K."/>
            <person name="Quail M.A."/>
            <person name="Churcher C."/>
            <person name="Arrowsmith C."/>
            <person name="Cherevach I."/>
            <person name="Chillingworth T."/>
            <person name="Clarke K."/>
            <person name="Cronin A."/>
            <person name="Davis P."/>
            <person name="Fraser A."/>
            <person name="Hance Z."/>
            <person name="Hauser H."/>
            <person name="Jagels K."/>
            <person name="Moule S."/>
            <person name="Mungall K."/>
            <person name="Norbertczak H."/>
            <person name="Rabbinowitsch E."/>
            <person name="Sanders M."/>
            <person name="Simmonds M."/>
            <person name="Whitehead S."/>
            <person name="Parkhill J."/>
        </authorList>
    </citation>
    <scope>NUCLEOTIDE SEQUENCE [LARGE SCALE GENOMIC DNA]</scope>
    <source>
        <strain>DSM 114642 / LMG 32736 / 3841</strain>
    </source>
</reference>
<accession>Q1MIE5</accession>
<proteinExistence type="inferred from homology"/>
<dbReference type="EMBL" id="AM236080">
    <property type="protein sequence ID" value="CAK07265.1"/>
    <property type="molecule type" value="Genomic_DNA"/>
</dbReference>
<dbReference type="RefSeq" id="WP_011651422.1">
    <property type="nucleotide sequence ID" value="NC_008380.1"/>
</dbReference>
<dbReference type="SMR" id="Q1MIE5"/>
<dbReference type="EnsemblBacteria" id="CAK07265">
    <property type="protein sequence ID" value="CAK07265"/>
    <property type="gene ID" value="RL1770"/>
</dbReference>
<dbReference type="GeneID" id="67484958"/>
<dbReference type="KEGG" id="rle:RL1770"/>
<dbReference type="eggNOG" id="COG0049">
    <property type="taxonomic scope" value="Bacteria"/>
</dbReference>
<dbReference type="HOGENOM" id="CLU_072226_1_1_5"/>
<dbReference type="Proteomes" id="UP000006575">
    <property type="component" value="Chromosome"/>
</dbReference>
<dbReference type="GO" id="GO:0015935">
    <property type="term" value="C:small ribosomal subunit"/>
    <property type="evidence" value="ECO:0007669"/>
    <property type="project" value="InterPro"/>
</dbReference>
<dbReference type="GO" id="GO:0019843">
    <property type="term" value="F:rRNA binding"/>
    <property type="evidence" value="ECO:0007669"/>
    <property type="project" value="UniProtKB-UniRule"/>
</dbReference>
<dbReference type="GO" id="GO:0003735">
    <property type="term" value="F:structural constituent of ribosome"/>
    <property type="evidence" value="ECO:0007669"/>
    <property type="project" value="InterPro"/>
</dbReference>
<dbReference type="GO" id="GO:0000049">
    <property type="term" value="F:tRNA binding"/>
    <property type="evidence" value="ECO:0007669"/>
    <property type="project" value="UniProtKB-UniRule"/>
</dbReference>
<dbReference type="GO" id="GO:0006412">
    <property type="term" value="P:translation"/>
    <property type="evidence" value="ECO:0007669"/>
    <property type="project" value="UniProtKB-UniRule"/>
</dbReference>
<dbReference type="CDD" id="cd14869">
    <property type="entry name" value="uS7_Bacteria"/>
    <property type="match status" value="1"/>
</dbReference>
<dbReference type="FunFam" id="1.10.455.10:FF:000001">
    <property type="entry name" value="30S ribosomal protein S7"/>
    <property type="match status" value="1"/>
</dbReference>
<dbReference type="Gene3D" id="1.10.455.10">
    <property type="entry name" value="Ribosomal protein S7 domain"/>
    <property type="match status" value="1"/>
</dbReference>
<dbReference type="HAMAP" id="MF_00480_B">
    <property type="entry name" value="Ribosomal_uS7_B"/>
    <property type="match status" value="1"/>
</dbReference>
<dbReference type="InterPro" id="IPR000235">
    <property type="entry name" value="Ribosomal_uS7"/>
</dbReference>
<dbReference type="InterPro" id="IPR005717">
    <property type="entry name" value="Ribosomal_uS7_bac/org-type"/>
</dbReference>
<dbReference type="InterPro" id="IPR020606">
    <property type="entry name" value="Ribosomal_uS7_CS"/>
</dbReference>
<dbReference type="InterPro" id="IPR023798">
    <property type="entry name" value="Ribosomal_uS7_dom"/>
</dbReference>
<dbReference type="InterPro" id="IPR036823">
    <property type="entry name" value="Ribosomal_uS7_dom_sf"/>
</dbReference>
<dbReference type="NCBIfam" id="TIGR01029">
    <property type="entry name" value="rpsG_bact"/>
    <property type="match status" value="1"/>
</dbReference>
<dbReference type="PANTHER" id="PTHR11205">
    <property type="entry name" value="RIBOSOMAL PROTEIN S7"/>
    <property type="match status" value="1"/>
</dbReference>
<dbReference type="Pfam" id="PF00177">
    <property type="entry name" value="Ribosomal_S7"/>
    <property type="match status" value="1"/>
</dbReference>
<dbReference type="PIRSF" id="PIRSF002122">
    <property type="entry name" value="RPS7p_RPS7a_RPS5e_RPS7o"/>
    <property type="match status" value="1"/>
</dbReference>
<dbReference type="SUPFAM" id="SSF47973">
    <property type="entry name" value="Ribosomal protein S7"/>
    <property type="match status" value="1"/>
</dbReference>
<dbReference type="PROSITE" id="PS00052">
    <property type="entry name" value="RIBOSOMAL_S7"/>
    <property type="match status" value="1"/>
</dbReference>
<keyword id="KW-0687">Ribonucleoprotein</keyword>
<keyword id="KW-0689">Ribosomal protein</keyword>
<keyword id="KW-0694">RNA-binding</keyword>
<keyword id="KW-0699">rRNA-binding</keyword>
<keyword id="KW-0820">tRNA-binding</keyword>
<comment type="function">
    <text evidence="1">One of the primary rRNA binding proteins, it binds directly to 16S rRNA where it nucleates assembly of the head domain of the 30S subunit. Is located at the subunit interface close to the decoding center, probably blocks exit of the E-site tRNA.</text>
</comment>
<comment type="subunit">
    <text evidence="1">Part of the 30S ribosomal subunit. Contacts proteins S9 and S11.</text>
</comment>
<comment type="similarity">
    <text evidence="1">Belongs to the universal ribosomal protein uS7 family.</text>
</comment>
<feature type="chain" id="PRO_1000014269" description="Small ribosomal subunit protein uS7">
    <location>
        <begin position="1"/>
        <end position="156"/>
    </location>
</feature>
<sequence>MSRRHKAEKREINPDPKFGDLVVTKFMNAIMLDGKKSVAENIVYGAFDVVQGKAKQEPLTVFHSALENIAPHVEVRSRRVGGATYQVPVDVRPERRQALAIRWLIAAARKRNETTMVDRLSGELLDASNNRGSAVKKREDTHKMADANRAFSHYRW</sequence>
<evidence type="ECO:0000255" key="1">
    <source>
        <dbReference type="HAMAP-Rule" id="MF_00480"/>
    </source>
</evidence>
<evidence type="ECO:0000305" key="2"/>
<gene>
    <name evidence="1" type="primary">rpsG</name>
    <name type="ordered locus">RL1770</name>
</gene>
<name>RS7_RHIJ3</name>